<dbReference type="EC" id="1.7.99.1" evidence="1"/>
<dbReference type="EMBL" id="CP000148">
    <property type="protein sequence ID" value="ABB33052.1"/>
    <property type="molecule type" value="Genomic_DNA"/>
</dbReference>
<dbReference type="RefSeq" id="WP_004513969.1">
    <property type="nucleotide sequence ID" value="NC_007517.1"/>
</dbReference>
<dbReference type="SMR" id="Q39RS2"/>
<dbReference type="STRING" id="269799.Gmet_2834"/>
<dbReference type="KEGG" id="gme:Gmet_2834"/>
<dbReference type="eggNOG" id="COG1151">
    <property type="taxonomic scope" value="Bacteria"/>
</dbReference>
<dbReference type="HOGENOM" id="CLU_038344_2_0_7"/>
<dbReference type="Proteomes" id="UP000007073">
    <property type="component" value="Chromosome"/>
</dbReference>
<dbReference type="GO" id="GO:0005737">
    <property type="term" value="C:cytoplasm"/>
    <property type="evidence" value="ECO:0007669"/>
    <property type="project" value="UniProtKB-SubCell"/>
</dbReference>
<dbReference type="GO" id="GO:0051539">
    <property type="term" value="F:4 iron, 4 sulfur cluster binding"/>
    <property type="evidence" value="ECO:0007669"/>
    <property type="project" value="UniProtKB-KW"/>
</dbReference>
<dbReference type="GO" id="GO:0050418">
    <property type="term" value="F:hydroxylamine reductase activity"/>
    <property type="evidence" value="ECO:0007669"/>
    <property type="project" value="UniProtKB-UniRule"/>
</dbReference>
<dbReference type="GO" id="GO:0046872">
    <property type="term" value="F:metal ion binding"/>
    <property type="evidence" value="ECO:0007669"/>
    <property type="project" value="UniProtKB-KW"/>
</dbReference>
<dbReference type="GO" id="GO:0004601">
    <property type="term" value="F:peroxidase activity"/>
    <property type="evidence" value="ECO:0007669"/>
    <property type="project" value="TreeGrafter"/>
</dbReference>
<dbReference type="GO" id="GO:0042542">
    <property type="term" value="P:response to hydrogen peroxide"/>
    <property type="evidence" value="ECO:0007669"/>
    <property type="project" value="TreeGrafter"/>
</dbReference>
<dbReference type="CDD" id="cd01914">
    <property type="entry name" value="HCP"/>
    <property type="match status" value="1"/>
</dbReference>
<dbReference type="FunFam" id="1.20.1270.20:FF:000001">
    <property type="entry name" value="Hydroxylamine reductase"/>
    <property type="match status" value="1"/>
</dbReference>
<dbReference type="FunFam" id="1.20.1270.20:FF:000002">
    <property type="entry name" value="Hydroxylamine reductase"/>
    <property type="match status" value="1"/>
</dbReference>
<dbReference type="FunFam" id="3.40.50.2030:FF:000001">
    <property type="entry name" value="Hydroxylamine reductase"/>
    <property type="match status" value="1"/>
</dbReference>
<dbReference type="FunFam" id="3.40.50.2030:FF:000002">
    <property type="entry name" value="Hydroxylamine reductase"/>
    <property type="match status" value="1"/>
</dbReference>
<dbReference type="Gene3D" id="1.20.1270.20">
    <property type="match status" value="2"/>
</dbReference>
<dbReference type="Gene3D" id="3.40.50.2030">
    <property type="match status" value="2"/>
</dbReference>
<dbReference type="HAMAP" id="MF_00069">
    <property type="entry name" value="Hydroxylam_reduct"/>
    <property type="match status" value="1"/>
</dbReference>
<dbReference type="InterPro" id="IPR004137">
    <property type="entry name" value="HCP/CODH"/>
</dbReference>
<dbReference type="InterPro" id="IPR010048">
    <property type="entry name" value="Hydroxylam_reduct"/>
</dbReference>
<dbReference type="InterPro" id="IPR016099">
    <property type="entry name" value="Prismane-like_a/b-sand"/>
</dbReference>
<dbReference type="InterPro" id="IPR011254">
    <property type="entry name" value="Prismane-like_sf"/>
</dbReference>
<dbReference type="InterPro" id="IPR016100">
    <property type="entry name" value="Prismane_a-bundle"/>
</dbReference>
<dbReference type="NCBIfam" id="TIGR01703">
    <property type="entry name" value="hybrid_clust"/>
    <property type="match status" value="1"/>
</dbReference>
<dbReference type="NCBIfam" id="NF003658">
    <property type="entry name" value="PRK05290.1"/>
    <property type="match status" value="1"/>
</dbReference>
<dbReference type="PANTHER" id="PTHR30109">
    <property type="entry name" value="HYDROXYLAMINE REDUCTASE"/>
    <property type="match status" value="1"/>
</dbReference>
<dbReference type="PANTHER" id="PTHR30109:SF0">
    <property type="entry name" value="HYDROXYLAMINE REDUCTASE"/>
    <property type="match status" value="1"/>
</dbReference>
<dbReference type="Pfam" id="PF03063">
    <property type="entry name" value="Prismane"/>
    <property type="match status" value="1"/>
</dbReference>
<dbReference type="PIRSF" id="PIRSF000076">
    <property type="entry name" value="HCP"/>
    <property type="match status" value="1"/>
</dbReference>
<dbReference type="SUPFAM" id="SSF56821">
    <property type="entry name" value="Prismane protein-like"/>
    <property type="match status" value="1"/>
</dbReference>
<proteinExistence type="inferred from homology"/>
<sequence length="549" mass="59644">MGMFCNQCEQAAKGVGCDIIGVCGKNPEVAALQDLMLYGLKGLAIYADKARELGVKEEKIDYFVLEGLFTTVTNVDFDPVQIAGKLRTCYDYKERIKALYETAYREKNGSSAPQITAGPAAWVIAGDLEGLVKQGQEHGINTHHADADIRSAIEILIYGLKGMAAYADHAYILGKKDEEVFAFFHKAMAATADPAKGLMDFVGLAMECGKLNIKVMGMLNEGHVAHYGHPVPTKVPTGTRKNKGILVSGHDLRMLEELLKQTDGKGIDVYPHGEMLPAHGYPGLKKYAHLYGNFGGAWQDQAKEFPHFPGAIIFNTNCIQRPADSYKDRLFSWGQVGWPGVKHINGWDFSEVINKALECPELADAPAKEILTGFGHNAVLGVADKVIEGVKAGAIKHFFLIGGCDGAKPGRNYYTELAEKVPQDCVILTLACGKYRFNKLEFGDIGGIPRLLDIGQCNDAYSALQIALALADAFKCGVNDLPLSMILSWYEQKAVVILLSLLHLGIKNIKIGPSLPAFVTPNVLNFLVENFNLGPITTVDADLKAALGQ</sequence>
<reference key="1">
    <citation type="journal article" date="2009" name="BMC Microbiol.">
        <title>The genome sequence of Geobacter metallireducens: features of metabolism, physiology and regulation common and dissimilar to Geobacter sulfurreducens.</title>
        <authorList>
            <person name="Aklujkar M."/>
            <person name="Krushkal J."/>
            <person name="DiBartolo G."/>
            <person name="Lapidus A."/>
            <person name="Land M.L."/>
            <person name="Lovley D.R."/>
        </authorList>
    </citation>
    <scope>NUCLEOTIDE SEQUENCE [LARGE SCALE GENOMIC DNA]</scope>
    <source>
        <strain>ATCC 53774 / DSM 7210 / GS-15</strain>
    </source>
</reference>
<protein>
    <recommendedName>
        <fullName evidence="1">Hydroxylamine reductase</fullName>
        <ecNumber evidence="1">1.7.99.1</ecNumber>
    </recommendedName>
    <alternativeName>
        <fullName evidence="1">Hybrid-cluster protein</fullName>
        <shortName evidence="1">HCP</shortName>
    </alternativeName>
    <alternativeName>
        <fullName evidence="1">Prismane protein</fullName>
    </alternativeName>
</protein>
<accession>Q39RS2</accession>
<organism>
    <name type="scientific">Geobacter metallireducens (strain ATCC 53774 / DSM 7210 / GS-15)</name>
    <dbReference type="NCBI Taxonomy" id="269799"/>
    <lineage>
        <taxon>Bacteria</taxon>
        <taxon>Pseudomonadati</taxon>
        <taxon>Thermodesulfobacteriota</taxon>
        <taxon>Desulfuromonadia</taxon>
        <taxon>Geobacterales</taxon>
        <taxon>Geobacteraceae</taxon>
        <taxon>Geobacter</taxon>
    </lineage>
</organism>
<gene>
    <name evidence="1" type="primary">hcp</name>
    <name type="ordered locus">Gmet_2834</name>
</gene>
<comment type="function">
    <text evidence="1">Catalyzes the reduction of hydroxylamine to form NH(3) and H(2)O.</text>
</comment>
<comment type="catalytic activity">
    <reaction evidence="1">
        <text>A + NH4(+) + H2O = hydroxylamine + AH2 + H(+)</text>
        <dbReference type="Rhea" id="RHEA:22052"/>
        <dbReference type="ChEBI" id="CHEBI:13193"/>
        <dbReference type="ChEBI" id="CHEBI:15377"/>
        <dbReference type="ChEBI" id="CHEBI:15378"/>
        <dbReference type="ChEBI" id="CHEBI:15429"/>
        <dbReference type="ChEBI" id="CHEBI:17499"/>
        <dbReference type="ChEBI" id="CHEBI:28938"/>
        <dbReference type="EC" id="1.7.99.1"/>
    </reaction>
</comment>
<comment type="cofactor">
    <cofactor evidence="1">
        <name>[4Fe-4S] cluster</name>
        <dbReference type="ChEBI" id="CHEBI:49883"/>
    </cofactor>
    <text evidence="1">Binds 1 [4Fe-4S] cluster.</text>
</comment>
<comment type="cofactor">
    <cofactor evidence="1">
        <name>hybrid [4Fe-2O-2S] cluster</name>
        <dbReference type="ChEBI" id="CHEBI:60519"/>
    </cofactor>
    <text evidence="1">Binds 1 hybrid [4Fe-2O-2S] cluster.</text>
</comment>
<comment type="subcellular location">
    <subcellularLocation>
        <location evidence="1">Cytoplasm</location>
    </subcellularLocation>
</comment>
<comment type="similarity">
    <text evidence="1">Belongs to the HCP family.</text>
</comment>
<name>HCP_GEOMG</name>
<feature type="chain" id="PRO_1000092338" description="Hydroxylamine reductase">
    <location>
        <begin position="1"/>
        <end position="549"/>
    </location>
</feature>
<feature type="binding site" evidence="1">
    <location>
        <position position="5"/>
    </location>
    <ligand>
        <name>[4Fe-4S] cluster</name>
        <dbReference type="ChEBI" id="CHEBI:49883"/>
    </ligand>
</feature>
<feature type="binding site" evidence="1">
    <location>
        <position position="8"/>
    </location>
    <ligand>
        <name>[4Fe-4S] cluster</name>
        <dbReference type="ChEBI" id="CHEBI:49883"/>
    </ligand>
</feature>
<feature type="binding site" evidence="1">
    <location>
        <position position="17"/>
    </location>
    <ligand>
        <name>[4Fe-4S] cluster</name>
        <dbReference type="ChEBI" id="CHEBI:49883"/>
    </ligand>
</feature>
<feature type="binding site" evidence="1">
    <location>
        <position position="23"/>
    </location>
    <ligand>
        <name>[4Fe-4S] cluster</name>
        <dbReference type="ChEBI" id="CHEBI:49883"/>
    </ligand>
</feature>
<feature type="binding site" evidence="1">
    <location>
        <position position="250"/>
    </location>
    <ligand>
        <name>hybrid [4Fe-2O-2S] cluster</name>
        <dbReference type="ChEBI" id="CHEBI:60519"/>
    </ligand>
</feature>
<feature type="binding site" evidence="1">
    <location>
        <position position="274"/>
    </location>
    <ligand>
        <name>hybrid [4Fe-2O-2S] cluster</name>
        <dbReference type="ChEBI" id="CHEBI:60519"/>
    </ligand>
</feature>
<feature type="binding site" evidence="1">
    <location>
        <position position="318"/>
    </location>
    <ligand>
        <name>hybrid [4Fe-2O-2S] cluster</name>
        <dbReference type="ChEBI" id="CHEBI:60519"/>
    </ligand>
</feature>
<feature type="binding site" description="via persulfide group" evidence="1">
    <location>
        <position position="404"/>
    </location>
    <ligand>
        <name>hybrid [4Fe-2O-2S] cluster</name>
        <dbReference type="ChEBI" id="CHEBI:60519"/>
    </ligand>
</feature>
<feature type="binding site" evidence="1">
    <location>
        <position position="432"/>
    </location>
    <ligand>
        <name>hybrid [4Fe-2O-2S] cluster</name>
        <dbReference type="ChEBI" id="CHEBI:60519"/>
    </ligand>
</feature>
<feature type="binding site" evidence="1">
    <location>
        <position position="457"/>
    </location>
    <ligand>
        <name>hybrid [4Fe-2O-2S] cluster</name>
        <dbReference type="ChEBI" id="CHEBI:60519"/>
    </ligand>
</feature>
<feature type="binding site" evidence="1">
    <location>
        <position position="491"/>
    </location>
    <ligand>
        <name>hybrid [4Fe-2O-2S] cluster</name>
        <dbReference type="ChEBI" id="CHEBI:60519"/>
    </ligand>
</feature>
<feature type="binding site" evidence="1">
    <location>
        <position position="493"/>
    </location>
    <ligand>
        <name>hybrid [4Fe-2O-2S] cluster</name>
        <dbReference type="ChEBI" id="CHEBI:60519"/>
    </ligand>
</feature>
<feature type="modified residue" description="Cysteine persulfide" evidence="1">
    <location>
        <position position="404"/>
    </location>
</feature>
<keyword id="KW-0004">4Fe-4S</keyword>
<keyword id="KW-0963">Cytoplasm</keyword>
<keyword id="KW-0408">Iron</keyword>
<keyword id="KW-0411">Iron-sulfur</keyword>
<keyword id="KW-0479">Metal-binding</keyword>
<keyword id="KW-0560">Oxidoreductase</keyword>
<keyword id="KW-1185">Reference proteome</keyword>
<evidence type="ECO:0000255" key="1">
    <source>
        <dbReference type="HAMAP-Rule" id="MF_00069"/>
    </source>
</evidence>